<proteinExistence type="inferred from homology"/>
<feature type="chain" id="PRO_1000053335" description="ATP synthase gamma chain">
    <location>
        <begin position="1"/>
        <end position="287"/>
    </location>
</feature>
<accession>Q31UN3</accession>
<reference key="1">
    <citation type="journal article" date="2005" name="Nucleic Acids Res.">
        <title>Genome dynamics and diversity of Shigella species, the etiologic agents of bacillary dysentery.</title>
        <authorList>
            <person name="Yang F."/>
            <person name="Yang J."/>
            <person name="Zhang X."/>
            <person name="Chen L."/>
            <person name="Jiang Y."/>
            <person name="Yan Y."/>
            <person name="Tang X."/>
            <person name="Wang J."/>
            <person name="Xiong Z."/>
            <person name="Dong J."/>
            <person name="Xue Y."/>
            <person name="Zhu Y."/>
            <person name="Xu X."/>
            <person name="Sun L."/>
            <person name="Chen S."/>
            <person name="Nie H."/>
            <person name="Peng J."/>
            <person name="Xu J."/>
            <person name="Wang Y."/>
            <person name="Yuan Z."/>
            <person name="Wen Y."/>
            <person name="Yao Z."/>
            <person name="Shen Y."/>
            <person name="Qiang B."/>
            <person name="Hou Y."/>
            <person name="Yu J."/>
            <person name="Jin Q."/>
        </authorList>
    </citation>
    <scope>NUCLEOTIDE SEQUENCE [LARGE SCALE GENOMIC DNA]</scope>
    <source>
        <strain>Sb227</strain>
    </source>
</reference>
<organism>
    <name type="scientific">Shigella boydii serotype 4 (strain Sb227)</name>
    <dbReference type="NCBI Taxonomy" id="300268"/>
    <lineage>
        <taxon>Bacteria</taxon>
        <taxon>Pseudomonadati</taxon>
        <taxon>Pseudomonadota</taxon>
        <taxon>Gammaproteobacteria</taxon>
        <taxon>Enterobacterales</taxon>
        <taxon>Enterobacteriaceae</taxon>
        <taxon>Shigella</taxon>
    </lineage>
</organism>
<sequence>MAGAKEIRSKIASVQNTQKITKAMEMVAASKMRKSQDRMAASRPYAETMRKVIGHLAHGNLEYKHLYLEDRDVKRVGYLVVSTDRGLCGGLNINLFKKLLAEMKTWTDKGVQCDLAMIGSKGVSFFNSVGGNVVAQVTGMGDNPSLSELIGPVKVMLQAYDEGRLDKLYIVSNKFINTMSQVPTISQLLPLPASDDDDLKHKSWDYLYEPDPKALLDTLLRRYVESQVYQGVVENLASEQAARMVAMKAATDNGGSLIKELQLVYNKARQASITQELTEIVSGAAAV</sequence>
<gene>
    <name evidence="1" type="primary">atpG</name>
    <name type="ordered locus">SBO_3754</name>
</gene>
<name>ATPG_SHIBS</name>
<keyword id="KW-0066">ATP synthesis</keyword>
<keyword id="KW-0997">Cell inner membrane</keyword>
<keyword id="KW-1003">Cell membrane</keyword>
<keyword id="KW-0139">CF(1)</keyword>
<keyword id="KW-0375">Hydrogen ion transport</keyword>
<keyword id="KW-0406">Ion transport</keyword>
<keyword id="KW-0472">Membrane</keyword>
<keyword id="KW-0813">Transport</keyword>
<evidence type="ECO:0000255" key="1">
    <source>
        <dbReference type="HAMAP-Rule" id="MF_00815"/>
    </source>
</evidence>
<comment type="function">
    <text evidence="1">Produces ATP from ADP in the presence of a proton gradient across the membrane. The gamma chain is believed to be important in regulating ATPase activity and the flow of protons through the CF(0) complex.</text>
</comment>
<comment type="subunit">
    <text evidence="1">F-type ATPases have 2 components, CF(1) - the catalytic core - and CF(0) - the membrane proton channel. CF(1) has five subunits: alpha(3), beta(3), gamma(1), delta(1), epsilon(1). CF(0) has three main subunits: a, b and c.</text>
</comment>
<comment type="subcellular location">
    <subcellularLocation>
        <location evidence="1">Cell inner membrane</location>
        <topology evidence="1">Peripheral membrane protein</topology>
    </subcellularLocation>
</comment>
<comment type="similarity">
    <text evidence="1">Belongs to the ATPase gamma chain family.</text>
</comment>
<dbReference type="EMBL" id="CP000036">
    <property type="protein sequence ID" value="ABB68225.1"/>
    <property type="molecule type" value="Genomic_DNA"/>
</dbReference>
<dbReference type="RefSeq" id="WP_000896496.1">
    <property type="nucleotide sequence ID" value="NC_007613.1"/>
</dbReference>
<dbReference type="SMR" id="Q31UN3"/>
<dbReference type="KEGG" id="sbo:SBO_3754"/>
<dbReference type="HOGENOM" id="CLU_050669_0_1_6"/>
<dbReference type="Proteomes" id="UP000007067">
    <property type="component" value="Chromosome"/>
</dbReference>
<dbReference type="GO" id="GO:0005886">
    <property type="term" value="C:plasma membrane"/>
    <property type="evidence" value="ECO:0007669"/>
    <property type="project" value="UniProtKB-SubCell"/>
</dbReference>
<dbReference type="GO" id="GO:0045259">
    <property type="term" value="C:proton-transporting ATP synthase complex"/>
    <property type="evidence" value="ECO:0007669"/>
    <property type="project" value="UniProtKB-KW"/>
</dbReference>
<dbReference type="GO" id="GO:0005524">
    <property type="term" value="F:ATP binding"/>
    <property type="evidence" value="ECO:0007669"/>
    <property type="project" value="UniProtKB-UniRule"/>
</dbReference>
<dbReference type="GO" id="GO:0046933">
    <property type="term" value="F:proton-transporting ATP synthase activity, rotational mechanism"/>
    <property type="evidence" value="ECO:0007669"/>
    <property type="project" value="UniProtKB-UniRule"/>
</dbReference>
<dbReference type="GO" id="GO:0042777">
    <property type="term" value="P:proton motive force-driven plasma membrane ATP synthesis"/>
    <property type="evidence" value="ECO:0007669"/>
    <property type="project" value="UniProtKB-UniRule"/>
</dbReference>
<dbReference type="CDD" id="cd12151">
    <property type="entry name" value="F1-ATPase_gamma"/>
    <property type="match status" value="1"/>
</dbReference>
<dbReference type="FunFam" id="1.10.287.80:FF:000005">
    <property type="entry name" value="ATP synthase gamma chain"/>
    <property type="match status" value="2"/>
</dbReference>
<dbReference type="FunFam" id="3.40.1380.10:FF:000001">
    <property type="entry name" value="ATP synthase gamma chain"/>
    <property type="match status" value="1"/>
</dbReference>
<dbReference type="Gene3D" id="3.40.1380.10">
    <property type="match status" value="1"/>
</dbReference>
<dbReference type="Gene3D" id="1.10.287.80">
    <property type="entry name" value="ATP synthase, gamma subunit, helix hairpin domain"/>
    <property type="match status" value="1"/>
</dbReference>
<dbReference type="HAMAP" id="MF_00815">
    <property type="entry name" value="ATP_synth_gamma_bact"/>
    <property type="match status" value="1"/>
</dbReference>
<dbReference type="InterPro" id="IPR035968">
    <property type="entry name" value="ATP_synth_F1_ATPase_gsu"/>
</dbReference>
<dbReference type="InterPro" id="IPR000131">
    <property type="entry name" value="ATP_synth_F1_gsu"/>
</dbReference>
<dbReference type="InterPro" id="IPR023632">
    <property type="entry name" value="ATP_synth_F1_gsu_CS"/>
</dbReference>
<dbReference type="NCBIfam" id="TIGR01146">
    <property type="entry name" value="ATPsyn_F1gamma"/>
    <property type="match status" value="1"/>
</dbReference>
<dbReference type="NCBIfam" id="NF004144">
    <property type="entry name" value="PRK05621.1-1"/>
    <property type="match status" value="1"/>
</dbReference>
<dbReference type="PANTHER" id="PTHR11693">
    <property type="entry name" value="ATP SYNTHASE GAMMA CHAIN"/>
    <property type="match status" value="1"/>
</dbReference>
<dbReference type="PANTHER" id="PTHR11693:SF22">
    <property type="entry name" value="ATP SYNTHASE SUBUNIT GAMMA, MITOCHONDRIAL"/>
    <property type="match status" value="1"/>
</dbReference>
<dbReference type="Pfam" id="PF00231">
    <property type="entry name" value="ATP-synt"/>
    <property type="match status" value="1"/>
</dbReference>
<dbReference type="PRINTS" id="PR00126">
    <property type="entry name" value="ATPASEGAMMA"/>
</dbReference>
<dbReference type="SUPFAM" id="SSF52943">
    <property type="entry name" value="ATP synthase (F1-ATPase), gamma subunit"/>
    <property type="match status" value="1"/>
</dbReference>
<dbReference type="PROSITE" id="PS00153">
    <property type="entry name" value="ATPASE_GAMMA"/>
    <property type="match status" value="1"/>
</dbReference>
<protein>
    <recommendedName>
        <fullName evidence="1">ATP synthase gamma chain</fullName>
    </recommendedName>
    <alternativeName>
        <fullName evidence="1">ATP synthase F1 sector gamma subunit</fullName>
    </alternativeName>
    <alternativeName>
        <fullName evidence="1">F-ATPase gamma subunit</fullName>
    </alternativeName>
</protein>